<comment type="similarity">
    <text evidence="1">Belongs to the deoxyhypusine synthase family.</text>
</comment>
<sequence>MAKKTQKDFLNPKELIKHIDIKKYSQAVSMVEDFSNMAYSSRDLARASKIYNMMLADKGCAVVLCLAGSLISAGLKKIVVDLLENNMIDAIVSTGANIVDQDFFEALGYKHYKGDQHNADDNLLRDLHIDRIYDTYINEDELKVCDETVHKILNTLEPRPYSSREIIWEMGKWLEAKKKGKDSIIYTAYKKGVPIFVPAFADCSAGFGFVAHQTERPTSHVTLDGAKDFLELTKIKINAKETGLLMFAGGVPKNFVQDTVVAAEILGQDSPMHKYAVQVTVADERDGALSGSTLKEASSWGKVSTALEQMVYAECTLAVPLITAYAYHKKAWKSRKGFNYIKFLQNDDAKIAKMKKQECCCCESKKSASKKAKKK</sequence>
<dbReference type="EC" id="2.5.-.-" evidence="1"/>
<dbReference type="EMBL" id="CP001055">
    <property type="protein sequence ID" value="ACC99012.1"/>
    <property type="molecule type" value="Genomic_DNA"/>
</dbReference>
<dbReference type="RefSeq" id="WP_012415627.1">
    <property type="nucleotide sequence ID" value="NC_010644.1"/>
</dbReference>
<dbReference type="SMR" id="B2KER6"/>
<dbReference type="STRING" id="445932.Emin_1464"/>
<dbReference type="KEGG" id="emi:Emin_1464"/>
<dbReference type="HOGENOM" id="CLU_039781_1_0_0"/>
<dbReference type="OrthoDB" id="9771211at2"/>
<dbReference type="Proteomes" id="UP000001029">
    <property type="component" value="Chromosome"/>
</dbReference>
<dbReference type="GO" id="GO:0005737">
    <property type="term" value="C:cytoplasm"/>
    <property type="evidence" value="ECO:0007669"/>
    <property type="project" value="TreeGrafter"/>
</dbReference>
<dbReference type="GO" id="GO:0034038">
    <property type="term" value="F:deoxyhypusine synthase activity"/>
    <property type="evidence" value="ECO:0007669"/>
    <property type="project" value="TreeGrafter"/>
</dbReference>
<dbReference type="Gene3D" id="3.40.910.10">
    <property type="entry name" value="Deoxyhypusine synthase"/>
    <property type="match status" value="1"/>
</dbReference>
<dbReference type="HAMAP" id="MF_00640">
    <property type="entry name" value="DHS_like"/>
    <property type="match status" value="1"/>
</dbReference>
<dbReference type="InterPro" id="IPR002773">
    <property type="entry name" value="Deoxyhypusine_synthase"/>
</dbReference>
<dbReference type="InterPro" id="IPR023496">
    <property type="entry name" value="Deoxyhypusine_synthase-like"/>
</dbReference>
<dbReference type="InterPro" id="IPR036982">
    <property type="entry name" value="Deoxyhypusine_synthase_sf"/>
</dbReference>
<dbReference type="InterPro" id="IPR029035">
    <property type="entry name" value="DHS-like_NAD/FAD-binding_dom"/>
</dbReference>
<dbReference type="NCBIfam" id="NF002699">
    <property type="entry name" value="PRK02492.1"/>
    <property type="match status" value="1"/>
</dbReference>
<dbReference type="PANTHER" id="PTHR11703">
    <property type="entry name" value="DEOXYHYPUSINE SYNTHASE"/>
    <property type="match status" value="1"/>
</dbReference>
<dbReference type="PANTHER" id="PTHR11703:SF2">
    <property type="entry name" value="DEOXYHYPUSINE SYNTHASE-LIKE PROTEIN"/>
    <property type="match status" value="1"/>
</dbReference>
<dbReference type="Pfam" id="PF01916">
    <property type="entry name" value="DS"/>
    <property type="match status" value="1"/>
</dbReference>
<dbReference type="SUPFAM" id="SSF52467">
    <property type="entry name" value="DHS-like NAD/FAD-binding domain"/>
    <property type="match status" value="1"/>
</dbReference>
<keyword id="KW-1185">Reference proteome</keyword>
<keyword id="KW-0808">Transferase</keyword>
<protein>
    <recommendedName>
        <fullName evidence="1">Deoxyhypusine synthase-like protein</fullName>
        <ecNumber evidence="1">2.5.-.-</ecNumber>
    </recommendedName>
</protein>
<reference key="1">
    <citation type="journal article" date="2009" name="Appl. Environ. Microbiol.">
        <title>Genomic analysis of 'Elusimicrobium minutum,' the first cultivated representative of the phylum 'Elusimicrobia' (formerly termite group 1).</title>
        <authorList>
            <person name="Herlemann D.P.R."/>
            <person name="Geissinger O."/>
            <person name="Ikeda-Ohtsubo W."/>
            <person name="Kunin V."/>
            <person name="Sun H."/>
            <person name="Lapidus A."/>
            <person name="Hugenholtz P."/>
            <person name="Brune A."/>
        </authorList>
    </citation>
    <scope>NUCLEOTIDE SEQUENCE [LARGE SCALE GENOMIC DNA]</scope>
    <source>
        <strain>Pei191</strain>
    </source>
</reference>
<organism>
    <name type="scientific">Elusimicrobium minutum (strain Pei191)</name>
    <dbReference type="NCBI Taxonomy" id="445932"/>
    <lineage>
        <taxon>Bacteria</taxon>
        <taxon>Pseudomonadati</taxon>
        <taxon>Elusimicrobiota</taxon>
        <taxon>Elusimicrobia</taxon>
        <taxon>Elusimicrobiales</taxon>
        <taxon>Elusimicrobiaceae</taxon>
        <taxon>Elusimicrobium</taxon>
    </lineage>
</organism>
<accession>B2KER6</accession>
<proteinExistence type="inferred from homology"/>
<name>DHSL_ELUMP</name>
<feature type="chain" id="PRO_1000130884" description="Deoxyhypusine synthase-like protein">
    <location>
        <begin position="1"/>
        <end position="375"/>
    </location>
</feature>
<gene>
    <name type="ordered locus">Emin_1464</name>
</gene>
<evidence type="ECO:0000255" key="1">
    <source>
        <dbReference type="HAMAP-Rule" id="MF_00640"/>
    </source>
</evidence>